<dbReference type="EMBL" id="D11079">
    <property type="protein sequence ID" value="BAA01808.1"/>
    <property type="molecule type" value="Genomic_DNA"/>
</dbReference>
<dbReference type="EMBL" id="M61187">
    <property type="protein sequence ID" value="AAA48332.1"/>
    <property type="molecule type" value="Genomic_DNA"/>
</dbReference>
<dbReference type="EMBL" id="X57318">
    <property type="protein sequence ID" value="CAA40585.1"/>
    <property type="molecule type" value="Genomic_DNA"/>
</dbReference>
<dbReference type="EMBL" id="AY243312">
    <property type="protein sequence ID" value="AAO89438.1"/>
    <property type="molecule type" value="Genomic_DNA"/>
</dbReference>
<dbReference type="PIR" id="JQ1772">
    <property type="entry name" value="B42521"/>
</dbReference>
<dbReference type="RefSeq" id="YP_233041.1">
    <property type="nucleotide sequence ID" value="NC_006998.1"/>
</dbReference>
<dbReference type="ELM" id="P68619"/>
<dbReference type="IntAct" id="P68619">
    <property type="interactions" value="7"/>
</dbReference>
<dbReference type="MINT" id="P68619"/>
<dbReference type="iPTMnet" id="P68619"/>
<dbReference type="DNASU" id="3707689"/>
<dbReference type="GeneID" id="3707689"/>
<dbReference type="KEGG" id="vg:3707689"/>
<dbReference type="Proteomes" id="UP000000344">
    <property type="component" value="Genome"/>
</dbReference>
<dbReference type="GO" id="GO:0043657">
    <property type="term" value="C:host cell"/>
    <property type="evidence" value="ECO:0007669"/>
    <property type="project" value="GOC"/>
</dbReference>
<dbReference type="GO" id="GO:0020002">
    <property type="term" value="C:host cell plasma membrane"/>
    <property type="evidence" value="ECO:0000314"/>
    <property type="project" value="UniProtKB"/>
</dbReference>
<dbReference type="GO" id="GO:0016020">
    <property type="term" value="C:membrane"/>
    <property type="evidence" value="ECO:0007669"/>
    <property type="project" value="UniProtKB-KW"/>
</dbReference>
<dbReference type="GO" id="GO:0075520">
    <property type="term" value="P:actin-dependent intracellular transport of virus"/>
    <property type="evidence" value="ECO:0000314"/>
    <property type="project" value="UniProtKB"/>
</dbReference>
<dbReference type="GO" id="GO:0106259">
    <property type="term" value="P:symbiont-mediated cell-to-cell migration in host"/>
    <property type="evidence" value="ECO:0000269"/>
    <property type="project" value="SigSci"/>
</dbReference>
<dbReference type="GO" id="GO:0019076">
    <property type="term" value="P:viral release from host cell"/>
    <property type="evidence" value="ECO:0000314"/>
    <property type="project" value="UniProtKB"/>
</dbReference>
<dbReference type="InterPro" id="IPR010274">
    <property type="entry name" value="Orthopox_A36R"/>
</dbReference>
<dbReference type="Pfam" id="PF05950">
    <property type="entry name" value="Orthopox_A36R"/>
    <property type="match status" value="1"/>
</dbReference>
<protein>
    <recommendedName>
        <fullName>Protein OPG164</fullName>
    </recommendedName>
</protein>
<reference key="1">
    <citation type="journal article" date="1991" name="J. Gen. Virol.">
        <title>Nucleotide sequence of 42 kbp of vaccinia virus strain WR from near the right inverted terminal repeat.</title>
        <authorList>
            <person name="Smith G.L."/>
            <person name="Chan Y.S."/>
            <person name="Howard S.T."/>
        </authorList>
    </citation>
    <scope>NUCLEOTIDE SEQUENCE [GENOMIC DNA]</scope>
</reference>
<reference key="2">
    <citation type="journal article" date="1991" name="J. Biol. Chem.">
        <title>Identification, sequence, and expression of the gene encoding a Mr 35,000 subunit of the vaccinia virus DNA-dependent RNA polymerase.</title>
        <authorList>
            <person name="Amegadzie B.Y."/>
            <person name="Ahn B.-Y."/>
            <person name="Moss B."/>
        </authorList>
    </citation>
    <scope>NUCLEOTIDE SEQUENCE [GENOMIC DNA]</scope>
</reference>
<reference key="3">
    <citation type="submission" date="2003-02" db="EMBL/GenBank/DDBJ databases">
        <title>Sequencing of the coding region of Vaccinia-WR to an average 9-fold redundancy and an error rate of 0.16/10kb.</title>
        <authorList>
            <person name="Esposito J.J."/>
            <person name="Frace A.M."/>
            <person name="Sammons S.A."/>
            <person name="Olsen-Rasmussen M."/>
            <person name="Osborne J."/>
            <person name="Wohlhueter R."/>
        </authorList>
    </citation>
    <scope>NUCLEOTIDE SEQUENCE [LARGE SCALE GENOMIC DNA]</scope>
</reference>
<reference key="4">
    <citation type="journal article" date="1998" name="Virology">
        <title>Role for the vaccinia virus A36R outer envelope protein in the formation of virus-tipped actin-containing microvilli and cell-to-cell virus spread.</title>
        <authorList>
            <person name="Wolffe E.J."/>
            <person name="Weisberg A.S."/>
            <person name="Moss B."/>
        </authorList>
    </citation>
    <scope>FUNCTION</scope>
</reference>
<reference key="5">
    <citation type="journal article" date="1999" name="Nature">
        <title>Actin-based motility of vaccinia virus mimics receptor tyrosine kinase signalling.</title>
        <authorList>
            <person name="Frischknecht F."/>
            <person name="Moreau V."/>
            <person name="Rottger S."/>
            <person name="Gonfloni S."/>
            <person name="Reckmann I."/>
            <person name="Superti-Furga G."/>
            <person name="Way M."/>
        </authorList>
    </citation>
    <scope>INTERACTION WITH HOST NCK</scope>
    <scope>MUTAGENESIS OF TYR-112 AND TYR-132</scope>
    <scope>PHOSPHORYLATION AT TYR-112 AND TYR-132</scope>
</reference>
<reference key="6">
    <citation type="journal article" date="2001" name="J. Cell Biol.">
        <title>Vaccinia virus utilizes microtubules for movement to the cell surface.</title>
        <authorList>
            <person name="Hollinshead M."/>
            <person name="Rodger G."/>
            <person name="Van Eijl H."/>
            <person name="Law M."/>
            <person name="Hollinshead R."/>
            <person name="Vaux D.J."/>
            <person name="Smith G.L."/>
        </authorList>
    </citation>
    <scope>FUNCTION</scope>
</reference>
<reference key="7">
    <citation type="journal article" date="2003" name="J. Virol.">
        <title>Mapping and functional analysis of interaction sites within the cytoplasmic domains of the vaccinia virus A33R and A36R envelope proteins.</title>
        <authorList>
            <person name="Ward B.M."/>
            <person name="Weisberg A.S."/>
            <person name="Moss B."/>
        </authorList>
    </citation>
    <scope>INTERACTION WITH PROTEIN A33</scope>
</reference>
<reference key="8">
    <citation type="journal article" date="2004" name="J. Virol.">
        <title>Vaccinia virus A36R membrane protein provides a direct link between intracellular enveloped virions and the microtubule motor kinesin.</title>
        <authorList>
            <person name="Ward B.M."/>
            <person name="Moss B."/>
        </authorList>
    </citation>
    <scope>INTERACTION WITH HOST KLC1</scope>
</reference>
<reference key="9">
    <citation type="journal article" date="2009" name="J. Virol.">
        <title>Vaccinia virus protein F12 associates with intracellular enveloped virions through an interaction with A36.</title>
        <authorList>
            <person name="Johnston S.C."/>
            <person name="Ward B.M."/>
        </authorList>
    </citation>
    <scope>FUNCTION</scope>
</reference>
<reference key="10">
    <citation type="journal article" date="2010" name="PLoS Pathog.">
        <title>Vaccinia protein F12 has structural similarity to kinesin light chain and contains a motor binding motif required for virion export.</title>
        <authorList>
            <person name="Morgan G.W."/>
            <person name="Hollinshead M."/>
            <person name="Ferguson B.J."/>
            <person name="Murphy B.J."/>
            <person name="Carpentier D.C."/>
            <person name="Smith G.L."/>
        </authorList>
    </citation>
    <scope>INTERACTION WITH PROTEIN OPG056</scope>
</reference>
<reference key="11">
    <citation type="journal article" date="2016" name="Nat. Microbiol.">
        <title>NPF motifs in the vaccinia virus protein A36 recruit intersectin-1 to promote Cdc42:N-WASP-mediated viral release from infected cells.</title>
        <authorList>
            <person name="Snetkov X."/>
            <person name="Weisswange I."/>
            <person name="Pfanzelter J."/>
            <person name="Humphries A.C."/>
            <person name="Way M."/>
        </authorList>
    </citation>
    <scope>FUNCTION</scope>
    <scope>INTERACTION WITH HOST EPS15 AND ITSN1</scope>
    <scope>MOTIF</scope>
    <scope>SUBCELLULAR LOCATION</scope>
</reference>
<reference key="12">
    <citation type="journal article" date="2017" name="J. Gen. Virol.">
        <title>Vaccinia virus egress mediated by virus protein A36 is reliant on the F12 protein.</title>
        <authorList>
            <person name="Carpentier D.C.J."/>
            <person name="Van Loggerenberg A."/>
            <person name="Dieckmann N.M.G."/>
            <person name="Smith G.L."/>
        </authorList>
    </citation>
    <scope>FUNCTION</scope>
    <scope>SUBCELLULAR LOCATION</scope>
    <scope>MUTAGENESIS OF TYR-112 AND TYR-132</scope>
</reference>
<feature type="chain" id="PRO_0000040600" description="Protein OPG164">
    <location>
        <begin position="1"/>
        <end position="221"/>
    </location>
</feature>
<feature type="topological domain" description="Extracellular">
    <location>
        <position position="1"/>
    </location>
</feature>
<feature type="transmembrane region" description="Helical" evidence="1">
    <location>
        <begin position="2"/>
        <end position="22"/>
    </location>
</feature>
<feature type="topological domain" description="Cytoplasmic">
    <location>
        <begin position="23"/>
        <end position="221"/>
    </location>
</feature>
<feature type="short sequence motif" description="NPF-motif" evidence="8">
    <location>
        <begin position="161"/>
        <end position="163"/>
    </location>
</feature>
<feature type="short sequence motif" description="NPF-motif" evidence="8">
    <location>
        <begin position="176"/>
        <end position="178"/>
    </location>
</feature>
<feature type="short sequence motif" description="NPF-motif" evidence="8">
    <location>
        <begin position="190"/>
        <end position="192"/>
    </location>
</feature>
<feature type="modified residue" description="Phosphotyrosine; by host" evidence="2">
    <location>
        <position position="112"/>
    </location>
</feature>
<feature type="modified residue" description="Phosphotyrosine; by host" evidence="2">
    <location>
        <position position="132"/>
    </location>
</feature>
<feature type="mutagenesis site" description="About 85% loss of virus-induced actin tail formation." evidence="2">
    <original>Y</original>
    <variation>F</variation>
    <location>
        <position position="112"/>
    </location>
</feature>
<feature type="mutagenesis site" description="Complete loss of virus-induced actin tail formation; when associated with Y-132." evidence="2">
    <original>Y</original>
    <variation>F</variation>
    <location>
        <position position="112"/>
    </location>
</feature>
<feature type="mutagenesis site" description="About 20% loss of virus-induced actin tail formation." evidence="2">
    <original>Y</original>
    <variation>F</variation>
    <location>
        <position position="132"/>
    </location>
</feature>
<sequence length="221" mass="25133">MMLVPLITVTVVAGTILVCYILYICRKKIRTVYNDNKIIMTKLKKIKSSNSSKSSKSTDSESDWEDHCSAMEQNNDVDNISRNEILDDDSFAGSLIWDNESNVMAPSTEHIYDSVAGSTLLINNDRNEQTIYQNTTVVINETETVEVLNEDTKQNPNYSSNPFVNYNKTSICSKSNPFITELNNKFSENNPFRRAHSDDYLNKQEQDHEHDDIESSVVSLV</sequence>
<proteinExistence type="evidence at protein level"/>
<gene>
    <name type="primary">OPG164</name>
    <name type="ordered locus">VACWR159</name>
    <name type="ORF">A36R</name>
</gene>
<keyword id="KW-1032">Host cell membrane</keyword>
<keyword id="KW-1043">Host membrane</keyword>
<keyword id="KW-0945">Host-virus interaction</keyword>
<keyword id="KW-0472">Membrane</keyword>
<keyword id="KW-0597">Phosphoprotein</keyword>
<keyword id="KW-1185">Reference proteome</keyword>
<keyword id="KW-0812">Transmembrane</keyword>
<keyword id="KW-1133">Transmembrane helix</keyword>
<accession>P68619</accession>
<accession>P21059</accession>
<accession>Q76ZP0</accession>
<organism>
    <name type="scientific">Vaccinia virus (strain Western Reserve)</name>
    <name type="common">VACV</name>
    <name type="synonym">Vaccinia virus (strain WR)</name>
    <dbReference type="NCBI Taxonomy" id="10254"/>
    <lineage>
        <taxon>Viruses</taxon>
        <taxon>Varidnaviria</taxon>
        <taxon>Bamfordvirae</taxon>
        <taxon>Nucleocytoviricota</taxon>
        <taxon>Pokkesviricetes</taxon>
        <taxon>Chitovirales</taxon>
        <taxon>Poxviridae</taxon>
        <taxon>Chordopoxvirinae</taxon>
        <taxon>Orthopoxvirus</taxon>
        <taxon>Vaccinia virus</taxon>
    </lineage>
</organism>
<organismHost>
    <name type="scientific">Bos taurus</name>
    <name type="common">Bovine</name>
    <dbReference type="NCBI Taxonomy" id="9913"/>
</organismHost>
<name>PG164_VACCW</name>
<evidence type="ECO:0000255" key="1"/>
<evidence type="ECO:0000269" key="2">
    <source>
    </source>
</evidence>
<evidence type="ECO:0000269" key="3">
    <source>
    </source>
</evidence>
<evidence type="ECO:0000269" key="4">
    <source>
    </source>
</evidence>
<evidence type="ECO:0000269" key="5">
    <source>
    </source>
</evidence>
<evidence type="ECO:0000269" key="6">
    <source>
    </source>
</evidence>
<evidence type="ECO:0000269" key="7">
    <source>
    </source>
</evidence>
<evidence type="ECO:0000269" key="8">
    <source>
    </source>
</evidence>
<evidence type="ECO:0000269" key="9">
    <source>
    </source>
</evidence>
<evidence type="ECO:0000269" key="10">
    <source>
    </source>
</evidence>
<evidence type="ECO:0000305" key="11"/>
<comment type="function">
    <text evidence="3 6 8 10">Involved in the intracellular transport and egress of virions to the host cell surface with help of protein OPG056 (PubMed:28631604). Also participates in the formation of actin tails at the plasma membrane to allow efficient actin-based motility and thus cell to cell transmission of viral particles. Recruits host intersectin-1/ITSN1 and activates host CDC42 to drive ARP2/3-mediated actin polymerization.</text>
</comment>
<comment type="subunit">
    <text evidence="2 4 5 7 8">Interacts with host NCK (PubMed:10553910). Interacts with protein OPG161 (via C-terminus) (PubMed:12634370). Interacts with protein OPG056 (PubMed:20195521). Interacts (via C-terminus) with host kinesin light chain/KLC1 (PubMed:14963148). Interacts with host intersectin-1/ITSN1 and EPS15 (PubMed:27670116).</text>
</comment>
<comment type="interaction">
    <interactant intactId="EBI-7133540">
        <id>P68619</id>
    </interactant>
    <interactant intactId="EBI-7133633">
        <id>P68617</id>
        <label>OPG161</label>
    </interactant>
    <organismsDiffer>false</organismsDiffer>
    <experiments>7</experiments>
</comment>
<comment type="interaction">
    <interactant intactId="EBI-7133540">
        <id>P68619</id>
    </interactant>
    <interactant intactId="EBI-355878">
        <id>P33176</id>
        <label>KIF5B</label>
    </interactant>
    <organismsDiffer>true</organismsDiffer>
    <experiments>3</experiments>
</comment>
<comment type="interaction">
    <interactant intactId="EBI-7133540">
        <id>P68619</id>
    </interactant>
    <interactant intactId="EBI-301550">
        <id>O88447</id>
        <label>Klc1</label>
    </interactant>
    <organismsDiffer>true</organismsDiffer>
    <experiments>2</experiments>
</comment>
<comment type="interaction">
    <interactant intactId="EBI-7133540">
        <id>P68619</id>
    </interactant>
    <interactant intactId="EBI-917396">
        <id>P37285</id>
        <label>Klc1</label>
    </interactant>
    <organismsDiffer>true</organismsDiffer>
    <experiments>4</experiments>
</comment>
<comment type="interaction">
    <interactant intactId="EBI-7133540">
        <id>P68619</id>
    </interactant>
    <interactant intactId="EBI-301558">
        <id>O88448</id>
        <label>Klc2</label>
    </interactant>
    <organismsDiffer>true</organismsDiffer>
    <experiments>3</experiments>
</comment>
<comment type="subcellular location">
    <subcellularLocation>
        <location evidence="8 9">Host cell membrane</location>
        <topology evidence="11">Single-pass membrane protein</topology>
    </subcellularLocation>
    <text>Found exclusively on the wrapped enveloped virion. Absent in the mature virion (MV) and extracellular enveloped virion (EV).</text>
</comment>
<comment type="PTM">
    <text evidence="2">Phosphorylated on Tyr-112 and Tyr-132. Phosphorylations activate the host ARP2-ARP3 complex and lead to actin nucleation.</text>
</comment>
<comment type="similarity">
    <text evidence="11">Belongs to the orthopoxvirus A36 protein family.</text>
</comment>